<name>DNLJ_SHIDS</name>
<comment type="function">
    <text evidence="1">DNA ligase that catalyzes the formation of phosphodiester linkages between 5'-phosphoryl and 3'-hydroxyl groups in double-stranded DNA using NAD as a coenzyme and as the energy source for the reaction. It is essential for DNA replication and repair of damaged DNA.</text>
</comment>
<comment type="catalytic activity">
    <reaction evidence="1">
        <text>NAD(+) + (deoxyribonucleotide)n-3'-hydroxyl + 5'-phospho-(deoxyribonucleotide)m = (deoxyribonucleotide)n+m + AMP + beta-nicotinamide D-nucleotide.</text>
        <dbReference type="EC" id="6.5.1.2"/>
    </reaction>
</comment>
<comment type="cofactor">
    <cofactor evidence="1">
        <name>Mg(2+)</name>
        <dbReference type="ChEBI" id="CHEBI:18420"/>
    </cofactor>
    <cofactor evidence="1">
        <name>Mn(2+)</name>
        <dbReference type="ChEBI" id="CHEBI:29035"/>
    </cofactor>
</comment>
<comment type="similarity">
    <text evidence="1">Belongs to the NAD-dependent DNA ligase family. LigA subfamily.</text>
</comment>
<sequence length="671" mass="73580">MESIEQQLTELRTTLRHHEYLYHVMDAPEIPDAEYDRLMRELRELETKHPELITPDSPTQRVGAAPLAAFSQIRHEVPMLSLDNVFDEESFLAFNKRVQDRLKSNEKVTWCCELKLDGLAVSILYENGVLVSAATRGDGTTGEDITSNVRTILAIPLKLHGENIPARLEVRGEVFLPQAGFEKINEDARRTGGKVFANPRNAAAGSLRQLDPRITAKRPLTFFCYGVGVLEGSELPDTHLGRLLQFKKWGLPVSDRVTLCESAEEVLVFYHKVEEDRPTLGFDIDGVVIKVNSLAQQEQLGFVARAPRWAVAFKFPAQEQMTFVRDVEFQVGRTGAITPVARLEPVHVAGVLVSNATLHNADEIERLGLRIGDKVVIRRAGDVIPQVVNVVLSERPEDSREVVFPTHCPVCGSDVERVEGEAVARCTGGLICGAQRKESLKHFVSRRAMDVDGMGDKIIDQLVEKEYVHTPADLFKLTAGKLTGLERMGPKSAQNVVNALEKAKETTFARFLYALGIREVGEATAAGLAAYFGTLEALEAASIEELQKVPDVGIVVASHVHNFFAEESNRNVISELLAEGVHWPAPIVINAEEIDSPFAGKTVVLTGSLSQMSRDDAKARLVELGAKVAGSVSKKTDLVIAGEAAGSKLAKAQELGIEVIDEAEMLRLLGS</sequence>
<evidence type="ECO:0000255" key="1">
    <source>
        <dbReference type="HAMAP-Rule" id="MF_01588"/>
    </source>
</evidence>
<dbReference type="EC" id="6.5.1.2" evidence="1"/>
<dbReference type="EMBL" id="CP000034">
    <property type="protein sequence ID" value="ABB62663.1"/>
    <property type="molecule type" value="Genomic_DNA"/>
</dbReference>
<dbReference type="RefSeq" id="WP_000443676.1">
    <property type="nucleotide sequence ID" value="NC_007606.1"/>
</dbReference>
<dbReference type="RefSeq" id="YP_404154.1">
    <property type="nucleotide sequence ID" value="NC_007606.1"/>
</dbReference>
<dbReference type="SMR" id="Q32DE2"/>
<dbReference type="STRING" id="300267.SDY_2608"/>
<dbReference type="EnsemblBacteria" id="ABB62663">
    <property type="protein sequence ID" value="ABB62663"/>
    <property type="gene ID" value="SDY_2608"/>
</dbReference>
<dbReference type="KEGG" id="sdy:SDY_2608"/>
<dbReference type="PATRIC" id="fig|300267.13.peg.3145"/>
<dbReference type="HOGENOM" id="CLU_007764_2_1_6"/>
<dbReference type="Proteomes" id="UP000002716">
    <property type="component" value="Chromosome"/>
</dbReference>
<dbReference type="GO" id="GO:0005829">
    <property type="term" value="C:cytosol"/>
    <property type="evidence" value="ECO:0007669"/>
    <property type="project" value="TreeGrafter"/>
</dbReference>
<dbReference type="GO" id="GO:0003677">
    <property type="term" value="F:DNA binding"/>
    <property type="evidence" value="ECO:0007669"/>
    <property type="project" value="InterPro"/>
</dbReference>
<dbReference type="GO" id="GO:0003911">
    <property type="term" value="F:DNA ligase (NAD+) activity"/>
    <property type="evidence" value="ECO:0007669"/>
    <property type="project" value="UniProtKB-UniRule"/>
</dbReference>
<dbReference type="GO" id="GO:0046872">
    <property type="term" value="F:metal ion binding"/>
    <property type="evidence" value="ECO:0007669"/>
    <property type="project" value="UniProtKB-KW"/>
</dbReference>
<dbReference type="GO" id="GO:0006281">
    <property type="term" value="P:DNA repair"/>
    <property type="evidence" value="ECO:0007669"/>
    <property type="project" value="UniProtKB-KW"/>
</dbReference>
<dbReference type="GO" id="GO:0006260">
    <property type="term" value="P:DNA replication"/>
    <property type="evidence" value="ECO:0007669"/>
    <property type="project" value="UniProtKB-KW"/>
</dbReference>
<dbReference type="CDD" id="cd17748">
    <property type="entry name" value="BRCT_DNA_ligase_like"/>
    <property type="match status" value="1"/>
</dbReference>
<dbReference type="CDD" id="cd00114">
    <property type="entry name" value="LIGANc"/>
    <property type="match status" value="1"/>
</dbReference>
<dbReference type="FunFam" id="1.10.150.20:FF:000006">
    <property type="entry name" value="DNA ligase"/>
    <property type="match status" value="1"/>
</dbReference>
<dbReference type="FunFam" id="1.10.150.20:FF:000007">
    <property type="entry name" value="DNA ligase"/>
    <property type="match status" value="1"/>
</dbReference>
<dbReference type="FunFam" id="1.10.287.610:FF:000002">
    <property type="entry name" value="DNA ligase"/>
    <property type="match status" value="1"/>
</dbReference>
<dbReference type="FunFam" id="2.40.50.140:FF:000012">
    <property type="entry name" value="DNA ligase"/>
    <property type="match status" value="1"/>
</dbReference>
<dbReference type="FunFam" id="3.30.470.30:FF:000001">
    <property type="entry name" value="DNA ligase"/>
    <property type="match status" value="1"/>
</dbReference>
<dbReference type="FunFam" id="3.40.50.10190:FF:000004">
    <property type="entry name" value="DNA ligase"/>
    <property type="match status" value="1"/>
</dbReference>
<dbReference type="FunFam" id="6.20.10.30:FF:000001">
    <property type="entry name" value="DNA ligase"/>
    <property type="match status" value="1"/>
</dbReference>
<dbReference type="Gene3D" id="6.20.10.30">
    <property type="match status" value="1"/>
</dbReference>
<dbReference type="Gene3D" id="1.10.150.20">
    <property type="entry name" value="5' to 3' exonuclease, C-terminal subdomain"/>
    <property type="match status" value="2"/>
</dbReference>
<dbReference type="Gene3D" id="3.40.50.10190">
    <property type="entry name" value="BRCT domain"/>
    <property type="match status" value="1"/>
</dbReference>
<dbReference type="Gene3D" id="3.30.470.30">
    <property type="entry name" value="DNA ligase/mRNA capping enzyme"/>
    <property type="match status" value="1"/>
</dbReference>
<dbReference type="Gene3D" id="1.10.287.610">
    <property type="entry name" value="Helix hairpin bin"/>
    <property type="match status" value="1"/>
</dbReference>
<dbReference type="Gene3D" id="2.40.50.140">
    <property type="entry name" value="Nucleic acid-binding proteins"/>
    <property type="match status" value="1"/>
</dbReference>
<dbReference type="HAMAP" id="MF_01588">
    <property type="entry name" value="DNA_ligase_A"/>
    <property type="match status" value="1"/>
</dbReference>
<dbReference type="InterPro" id="IPR001357">
    <property type="entry name" value="BRCT_dom"/>
</dbReference>
<dbReference type="InterPro" id="IPR036420">
    <property type="entry name" value="BRCT_dom_sf"/>
</dbReference>
<dbReference type="InterPro" id="IPR041663">
    <property type="entry name" value="DisA/LigA_HHH"/>
</dbReference>
<dbReference type="InterPro" id="IPR001679">
    <property type="entry name" value="DNA_ligase"/>
</dbReference>
<dbReference type="InterPro" id="IPR018239">
    <property type="entry name" value="DNA_ligase_AS"/>
</dbReference>
<dbReference type="InterPro" id="IPR033136">
    <property type="entry name" value="DNA_ligase_CS"/>
</dbReference>
<dbReference type="InterPro" id="IPR013839">
    <property type="entry name" value="DNAligase_adenylation"/>
</dbReference>
<dbReference type="InterPro" id="IPR013840">
    <property type="entry name" value="DNAligase_N"/>
</dbReference>
<dbReference type="InterPro" id="IPR003583">
    <property type="entry name" value="Hlx-hairpin-Hlx_DNA-bd_motif"/>
</dbReference>
<dbReference type="InterPro" id="IPR012340">
    <property type="entry name" value="NA-bd_OB-fold"/>
</dbReference>
<dbReference type="InterPro" id="IPR004150">
    <property type="entry name" value="NAD_DNA_ligase_OB"/>
</dbReference>
<dbReference type="InterPro" id="IPR010994">
    <property type="entry name" value="RuvA_2-like"/>
</dbReference>
<dbReference type="InterPro" id="IPR004149">
    <property type="entry name" value="Znf_DNAligase_C4"/>
</dbReference>
<dbReference type="NCBIfam" id="TIGR00575">
    <property type="entry name" value="dnlj"/>
    <property type="match status" value="1"/>
</dbReference>
<dbReference type="NCBIfam" id="NF005932">
    <property type="entry name" value="PRK07956.1"/>
    <property type="match status" value="1"/>
</dbReference>
<dbReference type="PANTHER" id="PTHR23389">
    <property type="entry name" value="CHROMOSOME TRANSMISSION FIDELITY FACTOR 18"/>
    <property type="match status" value="1"/>
</dbReference>
<dbReference type="PANTHER" id="PTHR23389:SF9">
    <property type="entry name" value="DNA LIGASE"/>
    <property type="match status" value="1"/>
</dbReference>
<dbReference type="Pfam" id="PF00533">
    <property type="entry name" value="BRCT"/>
    <property type="match status" value="1"/>
</dbReference>
<dbReference type="Pfam" id="PF01653">
    <property type="entry name" value="DNA_ligase_aden"/>
    <property type="match status" value="1"/>
</dbReference>
<dbReference type="Pfam" id="PF03120">
    <property type="entry name" value="DNA_ligase_OB"/>
    <property type="match status" value="1"/>
</dbReference>
<dbReference type="Pfam" id="PF03119">
    <property type="entry name" value="DNA_ligase_ZBD"/>
    <property type="match status" value="1"/>
</dbReference>
<dbReference type="Pfam" id="PF12826">
    <property type="entry name" value="HHH_2"/>
    <property type="match status" value="1"/>
</dbReference>
<dbReference type="Pfam" id="PF14520">
    <property type="entry name" value="HHH_5"/>
    <property type="match status" value="1"/>
</dbReference>
<dbReference type="Pfam" id="PF22745">
    <property type="entry name" value="Nlig-Ia"/>
    <property type="match status" value="1"/>
</dbReference>
<dbReference type="PIRSF" id="PIRSF001604">
    <property type="entry name" value="LigA"/>
    <property type="match status" value="1"/>
</dbReference>
<dbReference type="SMART" id="SM00292">
    <property type="entry name" value="BRCT"/>
    <property type="match status" value="1"/>
</dbReference>
<dbReference type="SMART" id="SM00278">
    <property type="entry name" value="HhH1"/>
    <property type="match status" value="4"/>
</dbReference>
<dbReference type="SMART" id="SM00532">
    <property type="entry name" value="LIGANc"/>
    <property type="match status" value="1"/>
</dbReference>
<dbReference type="SUPFAM" id="SSF52113">
    <property type="entry name" value="BRCT domain"/>
    <property type="match status" value="1"/>
</dbReference>
<dbReference type="SUPFAM" id="SSF56091">
    <property type="entry name" value="DNA ligase/mRNA capping enzyme, catalytic domain"/>
    <property type="match status" value="1"/>
</dbReference>
<dbReference type="SUPFAM" id="SSF50249">
    <property type="entry name" value="Nucleic acid-binding proteins"/>
    <property type="match status" value="1"/>
</dbReference>
<dbReference type="SUPFAM" id="SSF47781">
    <property type="entry name" value="RuvA domain 2-like"/>
    <property type="match status" value="1"/>
</dbReference>
<dbReference type="PROSITE" id="PS50172">
    <property type="entry name" value="BRCT"/>
    <property type="match status" value="1"/>
</dbReference>
<dbReference type="PROSITE" id="PS01055">
    <property type="entry name" value="DNA_LIGASE_N1"/>
    <property type="match status" value="1"/>
</dbReference>
<dbReference type="PROSITE" id="PS01056">
    <property type="entry name" value="DNA_LIGASE_N2"/>
    <property type="match status" value="1"/>
</dbReference>
<protein>
    <recommendedName>
        <fullName evidence="1">DNA ligase</fullName>
        <ecNumber evidence="1">6.5.1.2</ecNumber>
    </recommendedName>
    <alternativeName>
        <fullName evidence="1">Polydeoxyribonucleotide synthase [NAD(+)]</fullName>
    </alternativeName>
</protein>
<organism>
    <name type="scientific">Shigella dysenteriae serotype 1 (strain Sd197)</name>
    <dbReference type="NCBI Taxonomy" id="300267"/>
    <lineage>
        <taxon>Bacteria</taxon>
        <taxon>Pseudomonadati</taxon>
        <taxon>Pseudomonadota</taxon>
        <taxon>Gammaproteobacteria</taxon>
        <taxon>Enterobacterales</taxon>
        <taxon>Enterobacteriaceae</taxon>
        <taxon>Shigella</taxon>
    </lineage>
</organism>
<keyword id="KW-0227">DNA damage</keyword>
<keyword id="KW-0234">DNA repair</keyword>
<keyword id="KW-0235">DNA replication</keyword>
<keyword id="KW-0436">Ligase</keyword>
<keyword id="KW-0460">Magnesium</keyword>
<keyword id="KW-0464">Manganese</keyword>
<keyword id="KW-0479">Metal-binding</keyword>
<keyword id="KW-0520">NAD</keyword>
<keyword id="KW-1185">Reference proteome</keyword>
<keyword id="KW-0862">Zinc</keyword>
<gene>
    <name evidence="1" type="primary">ligA</name>
    <name type="ordered locus">SDY_2608</name>
</gene>
<feature type="chain" id="PRO_0000313435" description="DNA ligase">
    <location>
        <begin position="1"/>
        <end position="671"/>
    </location>
</feature>
<feature type="domain" description="BRCT" evidence="1">
    <location>
        <begin position="593"/>
        <end position="671"/>
    </location>
</feature>
<feature type="active site" description="N6-AMP-lysine intermediate" evidence="1">
    <location>
        <position position="115"/>
    </location>
</feature>
<feature type="binding site" evidence="1">
    <location>
        <begin position="32"/>
        <end position="36"/>
    </location>
    <ligand>
        <name>NAD(+)</name>
        <dbReference type="ChEBI" id="CHEBI:57540"/>
    </ligand>
</feature>
<feature type="binding site" evidence="1">
    <location>
        <begin position="81"/>
        <end position="82"/>
    </location>
    <ligand>
        <name>NAD(+)</name>
        <dbReference type="ChEBI" id="CHEBI:57540"/>
    </ligand>
</feature>
<feature type="binding site" evidence="1">
    <location>
        <position position="113"/>
    </location>
    <ligand>
        <name>NAD(+)</name>
        <dbReference type="ChEBI" id="CHEBI:57540"/>
    </ligand>
</feature>
<feature type="binding site" evidence="1">
    <location>
        <position position="136"/>
    </location>
    <ligand>
        <name>NAD(+)</name>
        <dbReference type="ChEBI" id="CHEBI:57540"/>
    </ligand>
</feature>
<feature type="binding site" evidence="1">
    <location>
        <position position="173"/>
    </location>
    <ligand>
        <name>NAD(+)</name>
        <dbReference type="ChEBI" id="CHEBI:57540"/>
    </ligand>
</feature>
<feature type="binding site" evidence="1">
    <location>
        <position position="290"/>
    </location>
    <ligand>
        <name>NAD(+)</name>
        <dbReference type="ChEBI" id="CHEBI:57540"/>
    </ligand>
</feature>
<feature type="binding site" evidence="1">
    <location>
        <position position="314"/>
    </location>
    <ligand>
        <name>NAD(+)</name>
        <dbReference type="ChEBI" id="CHEBI:57540"/>
    </ligand>
</feature>
<feature type="binding site" evidence="1">
    <location>
        <position position="408"/>
    </location>
    <ligand>
        <name>Zn(2+)</name>
        <dbReference type="ChEBI" id="CHEBI:29105"/>
    </ligand>
</feature>
<feature type="binding site" evidence="1">
    <location>
        <position position="411"/>
    </location>
    <ligand>
        <name>Zn(2+)</name>
        <dbReference type="ChEBI" id="CHEBI:29105"/>
    </ligand>
</feature>
<feature type="binding site" evidence="1">
    <location>
        <position position="426"/>
    </location>
    <ligand>
        <name>Zn(2+)</name>
        <dbReference type="ChEBI" id="CHEBI:29105"/>
    </ligand>
</feature>
<feature type="binding site" evidence="1">
    <location>
        <position position="432"/>
    </location>
    <ligand>
        <name>Zn(2+)</name>
        <dbReference type="ChEBI" id="CHEBI:29105"/>
    </ligand>
</feature>
<reference key="1">
    <citation type="journal article" date="2005" name="Nucleic Acids Res.">
        <title>Genome dynamics and diversity of Shigella species, the etiologic agents of bacillary dysentery.</title>
        <authorList>
            <person name="Yang F."/>
            <person name="Yang J."/>
            <person name="Zhang X."/>
            <person name="Chen L."/>
            <person name="Jiang Y."/>
            <person name="Yan Y."/>
            <person name="Tang X."/>
            <person name="Wang J."/>
            <person name="Xiong Z."/>
            <person name="Dong J."/>
            <person name="Xue Y."/>
            <person name="Zhu Y."/>
            <person name="Xu X."/>
            <person name="Sun L."/>
            <person name="Chen S."/>
            <person name="Nie H."/>
            <person name="Peng J."/>
            <person name="Xu J."/>
            <person name="Wang Y."/>
            <person name="Yuan Z."/>
            <person name="Wen Y."/>
            <person name="Yao Z."/>
            <person name="Shen Y."/>
            <person name="Qiang B."/>
            <person name="Hou Y."/>
            <person name="Yu J."/>
            <person name="Jin Q."/>
        </authorList>
    </citation>
    <scope>NUCLEOTIDE SEQUENCE [LARGE SCALE GENOMIC DNA]</scope>
    <source>
        <strain>Sd197</strain>
    </source>
</reference>
<proteinExistence type="inferred from homology"/>
<accession>Q32DE2</accession>